<organismHost>
    <name type="scientific">Saimiri sciureus</name>
    <name type="common">Common squirrel monkey</name>
    <dbReference type="NCBI Taxonomy" id="9521"/>
</organismHost>
<gene>
    <name type="primary">43</name>
</gene>
<evidence type="ECO:0000255" key="1">
    <source>
        <dbReference type="HAMAP-Rule" id="MF_04012"/>
    </source>
</evidence>
<name>PORTL_SHV21</name>
<keyword id="KW-1048">Host nucleus</keyword>
<keyword id="KW-1185">Reference proteome</keyword>
<keyword id="KW-0231">Viral genome packaging</keyword>
<keyword id="KW-1188">Viral release from host cell</keyword>
<keyword id="KW-0946">Virion</keyword>
<reference key="1">
    <citation type="journal article" date="1992" name="J. Virol.">
        <title>Primary structure of the herpesvirus saimiri genome.</title>
        <authorList>
            <person name="Albrecht J.-C."/>
            <person name="Nicholas J."/>
            <person name="Biller D."/>
            <person name="Cameron K.R."/>
            <person name="Biesinger B."/>
            <person name="Newman C."/>
            <person name="Wittmann S."/>
            <person name="Craxton M.A."/>
            <person name="Coleman H."/>
            <person name="Fleckenstein B."/>
            <person name="Honess R.W."/>
        </authorList>
    </citation>
    <scope>NUCLEOTIDE SEQUENCE [LARGE SCALE GENOMIC DNA]</scope>
</reference>
<dbReference type="EMBL" id="X64346">
    <property type="protein sequence ID" value="CAA45667.1"/>
    <property type="molecule type" value="Genomic_DNA"/>
</dbReference>
<dbReference type="RefSeq" id="NP_040245.1">
    <property type="nucleotide sequence ID" value="NC_001350.1"/>
</dbReference>
<dbReference type="SMR" id="Q01029"/>
<dbReference type="KEGG" id="vg:1682513"/>
<dbReference type="Proteomes" id="UP000000587">
    <property type="component" value="Segment"/>
</dbReference>
<dbReference type="GO" id="GO:0042025">
    <property type="term" value="C:host cell nucleus"/>
    <property type="evidence" value="ECO:0007669"/>
    <property type="project" value="UniProtKB-SubCell"/>
</dbReference>
<dbReference type="GO" id="GO:0044423">
    <property type="term" value="C:virion component"/>
    <property type="evidence" value="ECO:0007669"/>
    <property type="project" value="UniProtKB-KW"/>
</dbReference>
<dbReference type="GO" id="GO:0051276">
    <property type="term" value="P:chromosome organization"/>
    <property type="evidence" value="ECO:0007669"/>
    <property type="project" value="InterPro"/>
</dbReference>
<dbReference type="HAMAP" id="MF_04012">
    <property type="entry name" value="HSV_PORTL"/>
    <property type="match status" value="1"/>
</dbReference>
<dbReference type="InterPro" id="IPR002660">
    <property type="entry name" value="Herpes_Portal"/>
</dbReference>
<dbReference type="Pfam" id="PF01763">
    <property type="entry name" value="Herpes_UL6"/>
    <property type="match status" value="1"/>
</dbReference>
<organism>
    <name type="scientific">Saimiriine herpesvirus 2 (strain 11)</name>
    <name type="common">SaHV-2</name>
    <name type="synonym">Herpesvirus saimiri</name>
    <dbReference type="NCBI Taxonomy" id="10383"/>
    <lineage>
        <taxon>Viruses</taxon>
        <taxon>Duplodnaviria</taxon>
        <taxon>Heunggongvirae</taxon>
        <taxon>Peploviricota</taxon>
        <taxon>Herviviricetes</taxon>
        <taxon>Herpesvirales</taxon>
        <taxon>Orthoherpesviridae</taxon>
        <taxon>Gammaherpesvirinae</taxon>
        <taxon>Rhadinovirus</taxon>
        <taxon>Rhadinovirus saimiriinegamma2</taxon>
        <taxon>Saimiriine herpesvirus 2</taxon>
    </lineage>
</organism>
<comment type="function">
    <text evidence="1">Forms a portal in the viral capsid through which viral DNA is translocated during DNA packaging. Assembles as a dodecamer at a single fivefold axe of the T=16 icosahedric capsid. Binds to the molecular motor that translocates the viral DNA, termed terminase.</text>
</comment>
<comment type="subunit">
    <text evidence="1">Homododecamerizes. Interacts with terminase subunits TRM1 and TRM3.</text>
</comment>
<comment type="subcellular location">
    <subcellularLocation>
        <location evidence="1">Virion</location>
    </subcellularLocation>
    <subcellularLocation>
        <location evidence="1">Host nucleus</location>
    </subcellularLocation>
</comment>
<comment type="similarity">
    <text evidence="1">Belongs to the herpesviridae portal protein family.</text>
</comment>
<protein>
    <recommendedName>
        <fullName evidence="1">Portal protein</fullName>
    </recommendedName>
</protein>
<feature type="chain" id="PRO_0000115911" description="Portal protein">
    <location>
        <begin position="1"/>
        <end position="563"/>
    </location>
</feature>
<accession>Q01029</accession>
<sequence>MNSGLSSAIIPVHPTKISVHLFEILQGKYAYVKGQTLHSSLRNPGVFSRQLFIHIYKTVLSSCTYDHVISDWHKYEDNIKTRWKNENFTSDSFRKSTYQSWAQTMRMTIDQLVLNNIYQIIHSKITSYERYTDWVMALGLVPVVKQLPDEKLIRQIQSQLSAASKIAAGNDRVMRTILSALEYTVTDMLETLTSIYIPDYSEVTIDYRSKDQLFVGTYKGKHIAVEVITRPVIAKNIFFDSPVQRLFQNIMSCYRTTEHAKLCQLLNTAPIKAICGASTQNVYKDILSHLEQNSQKSDPKRELLSLLVKLAENKTVSGVTDVVEEFITDVSQNIVDKNKLFGSQESTTQGLKKHVSNNVFKCLTSQINEQFDTINKLEKERELYLGKINQIETQLLHLTQDEKQSVSPDNVLVSDTFCSLQTLQSSKLSMTSSDVPKGAAVLNSFFSQYVPPFRELNKDLTLLWESEIFHTFKLTPVVDPQGQRLYVKYTQDTVTILIGPFTYSITKLHQMELINDIFVSMSFNDIASYIYSTSRLAVYIADIGNKYCPSETDGSSSSSVTGS</sequence>
<proteinExistence type="inferred from homology"/>